<proteinExistence type="inferred from homology"/>
<gene>
    <name evidence="1" type="primary">purM</name>
    <name type="ordered locus">BLA_1127</name>
</gene>
<organism>
    <name type="scientific">Bifidobacterium animalis subsp. lactis (strain AD011)</name>
    <dbReference type="NCBI Taxonomy" id="442563"/>
    <lineage>
        <taxon>Bacteria</taxon>
        <taxon>Bacillati</taxon>
        <taxon>Actinomycetota</taxon>
        <taxon>Actinomycetes</taxon>
        <taxon>Bifidobacteriales</taxon>
        <taxon>Bifidobacteriaceae</taxon>
        <taxon>Bifidobacterium</taxon>
    </lineage>
</organism>
<dbReference type="EC" id="6.3.3.1" evidence="1"/>
<dbReference type="EMBL" id="CP001213">
    <property type="protein sequence ID" value="ACL29415.1"/>
    <property type="molecule type" value="Genomic_DNA"/>
</dbReference>
<dbReference type="RefSeq" id="WP_004218847.1">
    <property type="nucleotide sequence ID" value="NC_011835.1"/>
</dbReference>
<dbReference type="SMR" id="B8DTT6"/>
<dbReference type="STRING" id="442563.BLA_1127"/>
<dbReference type="GeneID" id="29695320"/>
<dbReference type="KEGG" id="bla:BLA_1127"/>
<dbReference type="PATRIC" id="fig|442563.4.peg.1181"/>
<dbReference type="HOGENOM" id="CLU_047116_0_0_11"/>
<dbReference type="UniPathway" id="UPA00074">
    <property type="reaction ID" value="UER00129"/>
</dbReference>
<dbReference type="Proteomes" id="UP000002456">
    <property type="component" value="Chromosome"/>
</dbReference>
<dbReference type="GO" id="GO:0005829">
    <property type="term" value="C:cytosol"/>
    <property type="evidence" value="ECO:0007669"/>
    <property type="project" value="TreeGrafter"/>
</dbReference>
<dbReference type="GO" id="GO:0005524">
    <property type="term" value="F:ATP binding"/>
    <property type="evidence" value="ECO:0007669"/>
    <property type="project" value="UniProtKB-KW"/>
</dbReference>
<dbReference type="GO" id="GO:0004637">
    <property type="term" value="F:phosphoribosylamine-glycine ligase activity"/>
    <property type="evidence" value="ECO:0007669"/>
    <property type="project" value="TreeGrafter"/>
</dbReference>
<dbReference type="GO" id="GO:0004641">
    <property type="term" value="F:phosphoribosylformylglycinamidine cyclo-ligase activity"/>
    <property type="evidence" value="ECO:0007669"/>
    <property type="project" value="UniProtKB-UniRule"/>
</dbReference>
<dbReference type="GO" id="GO:0006189">
    <property type="term" value="P:'de novo' IMP biosynthetic process"/>
    <property type="evidence" value="ECO:0007669"/>
    <property type="project" value="UniProtKB-UniRule"/>
</dbReference>
<dbReference type="GO" id="GO:0046084">
    <property type="term" value="P:adenine biosynthetic process"/>
    <property type="evidence" value="ECO:0007669"/>
    <property type="project" value="TreeGrafter"/>
</dbReference>
<dbReference type="CDD" id="cd02196">
    <property type="entry name" value="PurM"/>
    <property type="match status" value="1"/>
</dbReference>
<dbReference type="FunFam" id="3.30.1330.10:FF:000001">
    <property type="entry name" value="Phosphoribosylformylglycinamidine cyclo-ligase"/>
    <property type="match status" value="1"/>
</dbReference>
<dbReference type="FunFam" id="3.90.650.10:FF:000011">
    <property type="entry name" value="Phosphoribosylformylglycinamidine cyclo-ligase"/>
    <property type="match status" value="1"/>
</dbReference>
<dbReference type="Gene3D" id="3.90.650.10">
    <property type="entry name" value="PurM-like C-terminal domain"/>
    <property type="match status" value="1"/>
</dbReference>
<dbReference type="Gene3D" id="3.30.1330.10">
    <property type="entry name" value="PurM-like, N-terminal domain"/>
    <property type="match status" value="1"/>
</dbReference>
<dbReference type="HAMAP" id="MF_00741">
    <property type="entry name" value="AIRS"/>
    <property type="match status" value="1"/>
</dbReference>
<dbReference type="InterPro" id="IPR010918">
    <property type="entry name" value="PurM-like_C_dom"/>
</dbReference>
<dbReference type="InterPro" id="IPR036676">
    <property type="entry name" value="PurM-like_C_sf"/>
</dbReference>
<dbReference type="InterPro" id="IPR016188">
    <property type="entry name" value="PurM-like_N"/>
</dbReference>
<dbReference type="InterPro" id="IPR036921">
    <property type="entry name" value="PurM-like_N_sf"/>
</dbReference>
<dbReference type="InterPro" id="IPR004733">
    <property type="entry name" value="PurM_cligase"/>
</dbReference>
<dbReference type="NCBIfam" id="TIGR00878">
    <property type="entry name" value="purM"/>
    <property type="match status" value="1"/>
</dbReference>
<dbReference type="PANTHER" id="PTHR10520:SF12">
    <property type="entry name" value="TRIFUNCTIONAL PURINE BIOSYNTHETIC PROTEIN ADENOSINE-3"/>
    <property type="match status" value="1"/>
</dbReference>
<dbReference type="PANTHER" id="PTHR10520">
    <property type="entry name" value="TRIFUNCTIONAL PURINE BIOSYNTHETIC PROTEIN ADENOSINE-3-RELATED"/>
    <property type="match status" value="1"/>
</dbReference>
<dbReference type="Pfam" id="PF00586">
    <property type="entry name" value="AIRS"/>
    <property type="match status" value="1"/>
</dbReference>
<dbReference type="Pfam" id="PF02769">
    <property type="entry name" value="AIRS_C"/>
    <property type="match status" value="1"/>
</dbReference>
<dbReference type="SUPFAM" id="SSF56042">
    <property type="entry name" value="PurM C-terminal domain-like"/>
    <property type="match status" value="1"/>
</dbReference>
<dbReference type="SUPFAM" id="SSF55326">
    <property type="entry name" value="PurM N-terminal domain-like"/>
    <property type="match status" value="1"/>
</dbReference>
<feature type="chain" id="PRO_1000148268" description="Phosphoribosylformylglycinamidine cyclo-ligase">
    <location>
        <begin position="1"/>
        <end position="344"/>
    </location>
</feature>
<name>PUR5_BIFA0</name>
<comment type="catalytic activity">
    <reaction evidence="1">
        <text>2-formamido-N(1)-(5-O-phospho-beta-D-ribosyl)acetamidine + ATP = 5-amino-1-(5-phospho-beta-D-ribosyl)imidazole + ADP + phosphate + H(+)</text>
        <dbReference type="Rhea" id="RHEA:23032"/>
        <dbReference type="ChEBI" id="CHEBI:15378"/>
        <dbReference type="ChEBI" id="CHEBI:30616"/>
        <dbReference type="ChEBI" id="CHEBI:43474"/>
        <dbReference type="ChEBI" id="CHEBI:137981"/>
        <dbReference type="ChEBI" id="CHEBI:147287"/>
        <dbReference type="ChEBI" id="CHEBI:456216"/>
        <dbReference type="EC" id="6.3.3.1"/>
    </reaction>
</comment>
<comment type="pathway">
    <text evidence="1">Purine metabolism; IMP biosynthesis via de novo pathway; 5-amino-1-(5-phospho-D-ribosyl)imidazole from N(2)-formyl-N(1)-(5-phospho-D-ribosyl)glycinamide: step 2/2.</text>
</comment>
<comment type="subcellular location">
    <subcellularLocation>
        <location evidence="1">Cytoplasm</location>
    </subcellularLocation>
</comment>
<comment type="similarity">
    <text evidence="1">Belongs to the AIR synthase family.</text>
</comment>
<accession>B8DTT6</accession>
<reference key="1">
    <citation type="journal article" date="2009" name="J. Bacteriol.">
        <title>Genome sequence of the probiotic bacterium Bifidobacterium animalis subsp. lactis AD011.</title>
        <authorList>
            <person name="Kim J.F."/>
            <person name="Jeong H."/>
            <person name="Yu D.S."/>
            <person name="Choi S.-H."/>
            <person name="Hur C.-G."/>
            <person name="Park M.-S."/>
            <person name="Yoon S.H."/>
            <person name="Kim D.-W."/>
            <person name="Ji G.E."/>
            <person name="Park H.-S."/>
            <person name="Oh T.K."/>
        </authorList>
    </citation>
    <scope>NUCLEOTIDE SEQUENCE [LARGE SCALE GENOMIC DNA]</scope>
    <source>
        <strain>AD011</strain>
    </source>
</reference>
<sequence length="344" mass="36617">MPQAYENAGVSVEAGYEVVKRIKSHVARTNRPGVVSGIGGFGGLFDLASLGYNEPVLISGTDGVGTKLVIAKLMDKHDTIGIDCVAMCVNDVVAQGAQPLFFLDYIACGKNDPAVLEQVVSGVADGCVQAGAALIGGETAEMPGMYDEDEYDLAGFTVGCVERSKIVDGSTIEAGDVLIGLPSTGVHSNGFSLVRKALFEQAGYTVHTRLPELDDRELGDVLLTPTKIYVKALMPLFEANLVRGVAHITGGGFIENVPRMLPEGLAASIELGSWPVPPIFDVIEKAGDVDHMEMYNIFNMGLGMVVAIRPDRVDEAMNLLEHAGEKAYRVGHVIEQVNERVDLA</sequence>
<keyword id="KW-0067">ATP-binding</keyword>
<keyword id="KW-0963">Cytoplasm</keyword>
<keyword id="KW-0436">Ligase</keyword>
<keyword id="KW-0547">Nucleotide-binding</keyword>
<keyword id="KW-0658">Purine biosynthesis</keyword>
<keyword id="KW-1185">Reference proteome</keyword>
<evidence type="ECO:0000255" key="1">
    <source>
        <dbReference type="HAMAP-Rule" id="MF_00741"/>
    </source>
</evidence>
<protein>
    <recommendedName>
        <fullName evidence="1">Phosphoribosylformylglycinamidine cyclo-ligase</fullName>
        <ecNumber evidence="1">6.3.3.1</ecNumber>
    </recommendedName>
    <alternativeName>
        <fullName evidence="1">AIR synthase</fullName>
    </alternativeName>
    <alternativeName>
        <fullName evidence="1">AIRS</fullName>
    </alternativeName>
    <alternativeName>
        <fullName evidence="1">Phosphoribosyl-aminoimidazole synthetase</fullName>
    </alternativeName>
</protein>